<keyword id="KW-0238">DNA-binding</keyword>
<keyword id="KW-0371">Homeobox</keyword>
<keyword id="KW-0539">Nucleus</keyword>
<sequence>MEDYNNQMDHESSGGRGNFLYASPNLGGNYGRAASDHQMGINTFHLQSSGGGGGGGSGDQCNFQSPGTHPINVKTEATTSQHGHQKFQYNNNNNSHLVSSSRGHQPVIHQLQNNFDLLNDDHSLSSNEVEAIKAKIIAHPQYSNLLEAYMDCQRVGAPSDVVARLSVARQEFEARQRSSGTSRETSKDPELDQFMEAYYDMLVKYREELTRPIQEAMDFMRRIETQLNMLGNNNNAPPLRIFSPSEDKCEGIGSSEEEQENSGGETEVPEIDPRAEDRELKNHLLRKYSGYLSSLKQELSKKKKKGKLPKDARQKLLSWWELHYKWPYPSESEKVALAESTGLDQKQINNWFINQRKRHWKPSEDMQFMVMDGLHPQNAALYMDGHYIGDGHYRLGP</sequence>
<comment type="function">
    <text>Probably binds to the DNA sequence 5'-TGAC-3'.</text>
</comment>
<comment type="subcellular location">
    <subcellularLocation>
        <location evidence="4">Nucleus</location>
    </subcellularLocation>
</comment>
<comment type="tissue specificity">
    <text>Expressed only in the stems.</text>
</comment>
<comment type="similarity">
    <text evidence="2">Belongs to the TALE/KNOX homeobox family.</text>
</comment>
<accession>O04135</accession>
<evidence type="ECO:0000255" key="1">
    <source>
        <dbReference type="PROSITE-ProRule" id="PRU00108"/>
    </source>
</evidence>
<evidence type="ECO:0000255" key="2">
    <source>
        <dbReference type="PROSITE-ProRule" id="PRU00559"/>
    </source>
</evidence>
<evidence type="ECO:0000256" key="3">
    <source>
        <dbReference type="SAM" id="MobiDB-lite"/>
    </source>
</evidence>
<evidence type="ECO:0000305" key="4"/>
<protein>
    <recommendedName>
        <fullName>Homeobox protein knotted-1-like 2</fullName>
    </recommendedName>
    <alternativeName>
        <fullName>KNAP2</fullName>
    </alternativeName>
</protein>
<organism>
    <name type="scientific">Malus domestica</name>
    <name type="common">Apple</name>
    <name type="synonym">Pyrus malus</name>
    <dbReference type="NCBI Taxonomy" id="3750"/>
    <lineage>
        <taxon>Eukaryota</taxon>
        <taxon>Viridiplantae</taxon>
        <taxon>Streptophyta</taxon>
        <taxon>Embryophyta</taxon>
        <taxon>Tracheophyta</taxon>
        <taxon>Spermatophyta</taxon>
        <taxon>Magnoliopsida</taxon>
        <taxon>eudicotyledons</taxon>
        <taxon>Gunneridae</taxon>
        <taxon>Pentapetalae</taxon>
        <taxon>rosids</taxon>
        <taxon>fabids</taxon>
        <taxon>Rosales</taxon>
        <taxon>Rosaceae</taxon>
        <taxon>Amygdaloideae</taxon>
        <taxon>Maleae</taxon>
        <taxon>Malus</taxon>
    </lineage>
</organism>
<name>KNAP2_MALDO</name>
<reference key="1">
    <citation type="journal article" date="1997" name="Plant Mol. Biol.">
        <title>Knotted1-like homeobox genes are expressed during apple tree (Malus domestica [L.] Borkh) growth and development.</title>
        <authorList>
            <person name="Watillon B."/>
            <person name="Kettmann R."/>
            <person name="Boxus P."/>
            <person name="Burny A."/>
        </authorList>
    </citation>
    <scope>NUCLEOTIDE SEQUENCE [MRNA]</scope>
    <source>
        <strain>cv. Wijcik</strain>
    </source>
</reference>
<dbReference type="EMBL" id="Z71979">
    <property type="protein sequence ID" value="CAA96511.1"/>
    <property type="molecule type" value="mRNA"/>
</dbReference>
<dbReference type="PIR" id="T17008">
    <property type="entry name" value="T17008"/>
</dbReference>
<dbReference type="SMR" id="O04135"/>
<dbReference type="GO" id="GO:0005634">
    <property type="term" value="C:nucleus"/>
    <property type="evidence" value="ECO:0007669"/>
    <property type="project" value="UniProtKB-SubCell"/>
</dbReference>
<dbReference type="GO" id="GO:0003677">
    <property type="term" value="F:DNA binding"/>
    <property type="evidence" value="ECO:0007669"/>
    <property type="project" value="UniProtKB-KW"/>
</dbReference>
<dbReference type="GO" id="GO:0000981">
    <property type="term" value="F:DNA-binding transcription factor activity, RNA polymerase II-specific"/>
    <property type="evidence" value="ECO:0007669"/>
    <property type="project" value="InterPro"/>
</dbReference>
<dbReference type="CDD" id="cd00086">
    <property type="entry name" value="homeodomain"/>
    <property type="match status" value="1"/>
</dbReference>
<dbReference type="FunFam" id="1.10.10.60:FF:000076">
    <property type="entry name" value="Homeobox protein knotted-1-like 2"/>
    <property type="match status" value="1"/>
</dbReference>
<dbReference type="Gene3D" id="1.10.10.60">
    <property type="entry name" value="Homeodomain-like"/>
    <property type="match status" value="1"/>
</dbReference>
<dbReference type="InterPro" id="IPR005539">
    <property type="entry name" value="ELK_dom"/>
</dbReference>
<dbReference type="InterPro" id="IPR001356">
    <property type="entry name" value="HD"/>
</dbReference>
<dbReference type="InterPro" id="IPR017970">
    <property type="entry name" value="Homeobox_CS"/>
</dbReference>
<dbReference type="InterPro" id="IPR009057">
    <property type="entry name" value="Homeodomain-like_sf"/>
</dbReference>
<dbReference type="InterPro" id="IPR008422">
    <property type="entry name" value="KN_HD"/>
</dbReference>
<dbReference type="InterPro" id="IPR005540">
    <property type="entry name" value="KNOX1"/>
</dbReference>
<dbReference type="InterPro" id="IPR005541">
    <property type="entry name" value="KNOX2"/>
</dbReference>
<dbReference type="InterPro" id="IPR050224">
    <property type="entry name" value="TALE_homeobox"/>
</dbReference>
<dbReference type="PANTHER" id="PTHR11850">
    <property type="entry name" value="HOMEOBOX PROTEIN TRANSCRIPTION FACTORS"/>
    <property type="match status" value="1"/>
</dbReference>
<dbReference type="Pfam" id="PF03789">
    <property type="entry name" value="ELK"/>
    <property type="match status" value="1"/>
</dbReference>
<dbReference type="Pfam" id="PF05920">
    <property type="entry name" value="Homeobox_KN"/>
    <property type="match status" value="1"/>
</dbReference>
<dbReference type="Pfam" id="PF03790">
    <property type="entry name" value="KNOX1"/>
    <property type="match status" value="1"/>
</dbReference>
<dbReference type="Pfam" id="PF03791">
    <property type="entry name" value="KNOX2"/>
    <property type="match status" value="1"/>
</dbReference>
<dbReference type="SMART" id="SM01188">
    <property type="entry name" value="ELK"/>
    <property type="match status" value="1"/>
</dbReference>
<dbReference type="SMART" id="SM00389">
    <property type="entry name" value="HOX"/>
    <property type="match status" value="1"/>
</dbReference>
<dbReference type="SMART" id="SM01255">
    <property type="entry name" value="KNOX1"/>
    <property type="match status" value="1"/>
</dbReference>
<dbReference type="SMART" id="SM01256">
    <property type="entry name" value="KNOX2"/>
    <property type="match status" value="1"/>
</dbReference>
<dbReference type="SUPFAM" id="SSF46689">
    <property type="entry name" value="Homeodomain-like"/>
    <property type="match status" value="1"/>
</dbReference>
<dbReference type="PROSITE" id="PS51213">
    <property type="entry name" value="ELK"/>
    <property type="match status" value="1"/>
</dbReference>
<dbReference type="PROSITE" id="PS00027">
    <property type="entry name" value="HOMEOBOX_1"/>
    <property type="match status" value="1"/>
</dbReference>
<dbReference type="PROSITE" id="PS50071">
    <property type="entry name" value="HOMEOBOX_2"/>
    <property type="match status" value="1"/>
</dbReference>
<proteinExistence type="evidence at transcript level"/>
<feature type="chain" id="PRO_0000048976" description="Homeobox protein knotted-1-like 2">
    <location>
        <begin position="1"/>
        <end position="397"/>
    </location>
</feature>
<feature type="domain" description="ELK" evidence="2">
    <location>
        <begin position="279"/>
        <end position="299"/>
    </location>
</feature>
<feature type="DNA-binding region" description="Homeobox; TALE-type" evidence="1">
    <location>
        <begin position="300"/>
        <end position="363"/>
    </location>
</feature>
<feature type="region of interest" description="Disordered" evidence="3">
    <location>
        <begin position="43"/>
        <end position="68"/>
    </location>
</feature>
<feature type="region of interest" description="Disordered" evidence="3">
    <location>
        <begin position="172"/>
        <end position="191"/>
    </location>
</feature>
<feature type="region of interest" description="Disordered" evidence="3">
    <location>
        <begin position="233"/>
        <end position="276"/>
    </location>
</feature>
<feature type="compositionally biased region" description="Gly residues" evidence="3">
    <location>
        <begin position="49"/>
        <end position="58"/>
    </location>
</feature>